<reference key="1">
    <citation type="submission" date="2007-08" db="EMBL/GenBank/DDBJ databases">
        <title>Complete sequence of Shewanella sediminis HAW-EB3.</title>
        <authorList>
            <consortium name="US DOE Joint Genome Institute"/>
            <person name="Copeland A."/>
            <person name="Lucas S."/>
            <person name="Lapidus A."/>
            <person name="Barry K."/>
            <person name="Glavina del Rio T."/>
            <person name="Dalin E."/>
            <person name="Tice H."/>
            <person name="Pitluck S."/>
            <person name="Chertkov O."/>
            <person name="Brettin T."/>
            <person name="Bruce D."/>
            <person name="Detter J.C."/>
            <person name="Han C."/>
            <person name="Schmutz J."/>
            <person name="Larimer F."/>
            <person name="Land M."/>
            <person name="Hauser L."/>
            <person name="Kyrpides N."/>
            <person name="Kim E."/>
            <person name="Zhao J.-S."/>
            <person name="Richardson P."/>
        </authorList>
    </citation>
    <scope>NUCLEOTIDE SEQUENCE [LARGE SCALE GENOMIC DNA]</scope>
    <source>
        <strain>HAW-EB3</strain>
    </source>
</reference>
<accession>A8FXM2</accession>
<feature type="chain" id="PRO_0000340221" description="Sulfate adenylyltransferase subunit 2 2">
    <location>
        <begin position="1"/>
        <end position="301"/>
    </location>
</feature>
<proteinExistence type="inferred from homology"/>
<sequence>MSKYQTHLKQLEAESIQIMREVAAEFDNPVMLYSVGKDSSVLLHLARKAFYPGKIPFPLMHVDTNWKFKEMIDFRDKMAKKHGFDLIVHKNPRGMEMGVGPFTHGSAKHTDIMKTEGLKQALDMHGFDAAFGGARRDEEKSRAKERVYSFRDSKHRWDPKNQRPELWNIYNGKVDKGESIRVFPLSNWTELDIWQYIYLEGIEIPSLYLAAERPVVERDGTLIMVDDERMPIEEGEKVENKMVRFRTLGCYPLTGAVESQAQTLPEIIQEMLLCTTSERQGRVIDNDSAGSMEKKKMEGYF</sequence>
<comment type="function">
    <text evidence="1">With CysN forms the ATP sulfurylase (ATPS) that catalyzes the adenylation of sulfate producing adenosine 5'-phosphosulfate (APS) and diphosphate, the first enzymatic step in sulfur assimilation pathway. APS synthesis involves the formation of a high-energy phosphoric-sulfuric acid anhydride bond driven by GTP hydrolysis by CysN coupled to ATP hydrolysis by CysD.</text>
</comment>
<comment type="catalytic activity">
    <reaction evidence="1">
        <text>sulfate + ATP + H(+) = adenosine 5'-phosphosulfate + diphosphate</text>
        <dbReference type="Rhea" id="RHEA:18133"/>
        <dbReference type="ChEBI" id="CHEBI:15378"/>
        <dbReference type="ChEBI" id="CHEBI:16189"/>
        <dbReference type="ChEBI" id="CHEBI:30616"/>
        <dbReference type="ChEBI" id="CHEBI:33019"/>
        <dbReference type="ChEBI" id="CHEBI:58243"/>
        <dbReference type="EC" id="2.7.7.4"/>
    </reaction>
</comment>
<comment type="pathway">
    <text evidence="1">Sulfur metabolism; hydrogen sulfide biosynthesis; sulfite from sulfate: step 1/3.</text>
</comment>
<comment type="subunit">
    <text evidence="1">Heterodimer composed of CysD, the smaller subunit, and CysN.</text>
</comment>
<comment type="similarity">
    <text evidence="1">Belongs to the PAPS reductase family. CysD subfamily.</text>
</comment>
<dbReference type="EC" id="2.7.7.4" evidence="1"/>
<dbReference type="EMBL" id="CP000821">
    <property type="protein sequence ID" value="ABV37595.1"/>
    <property type="molecule type" value="Genomic_DNA"/>
</dbReference>
<dbReference type="RefSeq" id="WP_012143325.1">
    <property type="nucleotide sequence ID" value="NC_009831.1"/>
</dbReference>
<dbReference type="SMR" id="A8FXM2"/>
<dbReference type="STRING" id="425104.Ssed_2988"/>
<dbReference type="KEGG" id="sse:Ssed_2988"/>
<dbReference type="eggNOG" id="COG0175">
    <property type="taxonomic scope" value="Bacteria"/>
</dbReference>
<dbReference type="HOGENOM" id="CLU_043026_0_0_6"/>
<dbReference type="OrthoDB" id="9772604at2"/>
<dbReference type="UniPathway" id="UPA00140">
    <property type="reaction ID" value="UER00204"/>
</dbReference>
<dbReference type="Proteomes" id="UP000002015">
    <property type="component" value="Chromosome"/>
</dbReference>
<dbReference type="GO" id="GO:0005524">
    <property type="term" value="F:ATP binding"/>
    <property type="evidence" value="ECO:0007669"/>
    <property type="project" value="UniProtKB-KW"/>
</dbReference>
<dbReference type="GO" id="GO:0004781">
    <property type="term" value="F:sulfate adenylyltransferase (ATP) activity"/>
    <property type="evidence" value="ECO:0007669"/>
    <property type="project" value="UniProtKB-UniRule"/>
</dbReference>
<dbReference type="GO" id="GO:0070814">
    <property type="term" value="P:hydrogen sulfide biosynthetic process"/>
    <property type="evidence" value="ECO:0007669"/>
    <property type="project" value="UniProtKB-UniRule"/>
</dbReference>
<dbReference type="GO" id="GO:0000103">
    <property type="term" value="P:sulfate assimilation"/>
    <property type="evidence" value="ECO:0007669"/>
    <property type="project" value="UniProtKB-UniRule"/>
</dbReference>
<dbReference type="CDD" id="cd23946">
    <property type="entry name" value="Sulfate_adenylyltransferase_2"/>
    <property type="match status" value="1"/>
</dbReference>
<dbReference type="FunFam" id="3.40.50.620:FF:000002">
    <property type="entry name" value="Sulfate adenylyltransferase subunit 2"/>
    <property type="match status" value="1"/>
</dbReference>
<dbReference type="Gene3D" id="3.40.50.620">
    <property type="entry name" value="HUPs"/>
    <property type="match status" value="1"/>
</dbReference>
<dbReference type="HAMAP" id="MF_00064">
    <property type="entry name" value="Sulf_adenylyltr_sub2"/>
    <property type="match status" value="1"/>
</dbReference>
<dbReference type="InterPro" id="IPR002500">
    <property type="entry name" value="PAPS_reduct_dom"/>
</dbReference>
<dbReference type="InterPro" id="IPR014729">
    <property type="entry name" value="Rossmann-like_a/b/a_fold"/>
</dbReference>
<dbReference type="InterPro" id="IPR011784">
    <property type="entry name" value="SO4_adenylTrfase_ssu"/>
</dbReference>
<dbReference type="InterPro" id="IPR050128">
    <property type="entry name" value="Sulfate_adenylyltrnsfr_sub2"/>
</dbReference>
<dbReference type="NCBIfam" id="TIGR02039">
    <property type="entry name" value="CysD"/>
    <property type="match status" value="1"/>
</dbReference>
<dbReference type="NCBIfam" id="NF003587">
    <property type="entry name" value="PRK05253.1"/>
    <property type="match status" value="1"/>
</dbReference>
<dbReference type="NCBIfam" id="NF009214">
    <property type="entry name" value="PRK12563.1"/>
    <property type="match status" value="1"/>
</dbReference>
<dbReference type="PANTHER" id="PTHR43196">
    <property type="entry name" value="SULFATE ADENYLYLTRANSFERASE SUBUNIT 2"/>
    <property type="match status" value="1"/>
</dbReference>
<dbReference type="PANTHER" id="PTHR43196:SF1">
    <property type="entry name" value="SULFATE ADENYLYLTRANSFERASE SUBUNIT 2"/>
    <property type="match status" value="1"/>
</dbReference>
<dbReference type="Pfam" id="PF01507">
    <property type="entry name" value="PAPS_reduct"/>
    <property type="match status" value="1"/>
</dbReference>
<dbReference type="PIRSF" id="PIRSF002936">
    <property type="entry name" value="CysDAde_trans"/>
    <property type="match status" value="1"/>
</dbReference>
<dbReference type="SUPFAM" id="SSF52402">
    <property type="entry name" value="Adenine nucleotide alpha hydrolases-like"/>
    <property type="match status" value="1"/>
</dbReference>
<gene>
    <name evidence="1" type="primary">cysD2</name>
    <name type="ordered locus">Ssed_2988</name>
</gene>
<name>CYSD2_SHESH</name>
<evidence type="ECO:0000255" key="1">
    <source>
        <dbReference type="HAMAP-Rule" id="MF_00064"/>
    </source>
</evidence>
<protein>
    <recommendedName>
        <fullName evidence="1">Sulfate adenylyltransferase subunit 2 2</fullName>
        <ecNumber evidence="1">2.7.7.4</ecNumber>
    </recommendedName>
    <alternativeName>
        <fullName evidence="1">ATP-sulfurylase small subunit 2</fullName>
    </alternativeName>
    <alternativeName>
        <fullName evidence="1">Sulfate adenylate transferase 2</fullName>
        <shortName evidence="1">SAT 2</shortName>
    </alternativeName>
</protein>
<organism>
    <name type="scientific">Shewanella sediminis (strain HAW-EB3)</name>
    <dbReference type="NCBI Taxonomy" id="425104"/>
    <lineage>
        <taxon>Bacteria</taxon>
        <taxon>Pseudomonadati</taxon>
        <taxon>Pseudomonadota</taxon>
        <taxon>Gammaproteobacteria</taxon>
        <taxon>Alteromonadales</taxon>
        <taxon>Shewanellaceae</taxon>
        <taxon>Shewanella</taxon>
    </lineage>
</organism>
<keyword id="KW-0067">ATP-binding</keyword>
<keyword id="KW-0547">Nucleotide-binding</keyword>
<keyword id="KW-0548">Nucleotidyltransferase</keyword>
<keyword id="KW-1185">Reference proteome</keyword>
<keyword id="KW-0808">Transferase</keyword>